<sequence>MKIIFNADDFGISPGAVYGILESYRRGVVKSTTLLANSPAFDLAVEVAKENPGLDIGAHLTLTFGYPLLQGLETLTDDNGRFRKNYTALESGLANVDMEEVERELTAQIEKILGAGITISHFDTHHSIEPLIYPVQHKLAEKYGVSIRRHSDVSDFGAIKTPDLFDTSFYADGVSFETIKKIVQEHIGTNDVVEVMTHPAYIDETLREISSYVEPRIKEVSILTSRELQAYLGQQEVEIISFRDL</sequence>
<feature type="chain" id="PRO_0000051593" description="Carbohydrate deacetylase 1">
    <location>
        <begin position="1"/>
        <end position="245"/>
    </location>
</feature>
<feature type="binding site" evidence="1">
    <location>
        <position position="59"/>
    </location>
    <ligand>
        <name>Mg(2+)</name>
        <dbReference type="ChEBI" id="CHEBI:18420"/>
    </ligand>
</feature>
<feature type="binding site" evidence="1">
    <location>
        <position position="125"/>
    </location>
    <ligand>
        <name>Mg(2+)</name>
        <dbReference type="ChEBI" id="CHEBI:18420"/>
    </ligand>
</feature>
<gene>
    <name type="ordered locus">lin0230</name>
</gene>
<comment type="function">
    <text evidence="1">Probably catalyzes the deacetylation of acetylated carbohydrates an important step in the degradation of oligosaccharides.</text>
</comment>
<comment type="cofactor">
    <cofactor evidence="1">
        <name>Mg(2+)</name>
        <dbReference type="ChEBI" id="CHEBI:18420"/>
    </cofactor>
</comment>
<comment type="subunit">
    <text evidence="1">Homodimer.</text>
</comment>
<comment type="similarity">
    <text evidence="1">Belongs to the YdjC deacetylase family.</text>
</comment>
<keyword id="KW-0119">Carbohydrate metabolism</keyword>
<keyword id="KW-0378">Hydrolase</keyword>
<keyword id="KW-0460">Magnesium</keyword>
<keyword id="KW-0479">Metal-binding</keyword>
<dbReference type="EC" id="3.5.1.-" evidence="1"/>
<dbReference type="EMBL" id="AL596163">
    <property type="protein sequence ID" value="CAC95463.1"/>
    <property type="molecule type" value="Genomic_DNA"/>
</dbReference>
<dbReference type="PIR" id="AG1461">
    <property type="entry name" value="AG1461"/>
</dbReference>
<dbReference type="RefSeq" id="WP_010990287.1">
    <property type="nucleotide sequence ID" value="NC_003212.1"/>
</dbReference>
<dbReference type="SMR" id="Q92F76"/>
<dbReference type="STRING" id="272626.gene:17564542"/>
<dbReference type="GeneID" id="93233665"/>
<dbReference type="KEGG" id="lin:lin0230"/>
<dbReference type="eggNOG" id="COG3394">
    <property type="taxonomic scope" value="Bacteria"/>
</dbReference>
<dbReference type="HOGENOM" id="CLU_064244_4_0_9"/>
<dbReference type="OrthoDB" id="9774177at2"/>
<dbReference type="Proteomes" id="UP000002513">
    <property type="component" value="Chromosome"/>
</dbReference>
<dbReference type="GO" id="GO:0019213">
    <property type="term" value="F:deacetylase activity"/>
    <property type="evidence" value="ECO:0007669"/>
    <property type="project" value="TreeGrafter"/>
</dbReference>
<dbReference type="GO" id="GO:0016811">
    <property type="term" value="F:hydrolase activity, acting on carbon-nitrogen (but not peptide) bonds, in linear amides"/>
    <property type="evidence" value="ECO:0007669"/>
    <property type="project" value="UniProtKB-UniRule"/>
</dbReference>
<dbReference type="GO" id="GO:0046872">
    <property type="term" value="F:metal ion binding"/>
    <property type="evidence" value="ECO:0007669"/>
    <property type="project" value="UniProtKB-KW"/>
</dbReference>
<dbReference type="GO" id="GO:0000272">
    <property type="term" value="P:polysaccharide catabolic process"/>
    <property type="evidence" value="ECO:0007669"/>
    <property type="project" value="InterPro"/>
</dbReference>
<dbReference type="CDD" id="cd10803">
    <property type="entry name" value="YdjC_EF3048_like"/>
    <property type="match status" value="1"/>
</dbReference>
<dbReference type="FunFam" id="3.20.20.370:FF:000010">
    <property type="entry name" value="Carbohydrate deacetylase"/>
    <property type="match status" value="1"/>
</dbReference>
<dbReference type="Gene3D" id="3.20.20.370">
    <property type="entry name" value="Glycoside hydrolase/deacetylase"/>
    <property type="match status" value="1"/>
</dbReference>
<dbReference type="HAMAP" id="MF_01246">
    <property type="entry name" value="COD"/>
    <property type="match status" value="1"/>
</dbReference>
<dbReference type="InterPro" id="IPR022948">
    <property type="entry name" value="COD_ChbG_bac"/>
</dbReference>
<dbReference type="InterPro" id="IPR011330">
    <property type="entry name" value="Glyco_hydro/deAcase_b/a-brl"/>
</dbReference>
<dbReference type="InterPro" id="IPR006879">
    <property type="entry name" value="YdjC-like"/>
</dbReference>
<dbReference type="NCBIfam" id="NF002559">
    <property type="entry name" value="PRK02134.1"/>
    <property type="match status" value="1"/>
</dbReference>
<dbReference type="PANTHER" id="PTHR31609:SF1">
    <property type="entry name" value="CARBOHYDRATE DEACETYLASE"/>
    <property type="match status" value="1"/>
</dbReference>
<dbReference type="PANTHER" id="PTHR31609">
    <property type="entry name" value="YDJC DEACETYLASE FAMILY MEMBER"/>
    <property type="match status" value="1"/>
</dbReference>
<dbReference type="Pfam" id="PF04794">
    <property type="entry name" value="YdjC"/>
    <property type="match status" value="1"/>
</dbReference>
<dbReference type="SUPFAM" id="SSF88713">
    <property type="entry name" value="Glycoside hydrolase/deacetylase"/>
    <property type="match status" value="1"/>
</dbReference>
<proteinExistence type="inferred from homology"/>
<name>YDJC1_LISIN</name>
<protein>
    <recommendedName>
        <fullName evidence="1">Carbohydrate deacetylase 1</fullName>
        <ecNumber evidence="1">3.5.1.-</ecNumber>
    </recommendedName>
</protein>
<accession>Q92F76</accession>
<evidence type="ECO:0000255" key="1">
    <source>
        <dbReference type="HAMAP-Rule" id="MF_01246"/>
    </source>
</evidence>
<organism>
    <name type="scientific">Listeria innocua serovar 6a (strain ATCC BAA-680 / CLIP 11262)</name>
    <dbReference type="NCBI Taxonomy" id="272626"/>
    <lineage>
        <taxon>Bacteria</taxon>
        <taxon>Bacillati</taxon>
        <taxon>Bacillota</taxon>
        <taxon>Bacilli</taxon>
        <taxon>Bacillales</taxon>
        <taxon>Listeriaceae</taxon>
        <taxon>Listeria</taxon>
    </lineage>
</organism>
<reference key="1">
    <citation type="journal article" date="2001" name="Science">
        <title>Comparative genomics of Listeria species.</title>
        <authorList>
            <person name="Glaser P."/>
            <person name="Frangeul L."/>
            <person name="Buchrieser C."/>
            <person name="Rusniok C."/>
            <person name="Amend A."/>
            <person name="Baquero F."/>
            <person name="Berche P."/>
            <person name="Bloecker H."/>
            <person name="Brandt P."/>
            <person name="Chakraborty T."/>
            <person name="Charbit A."/>
            <person name="Chetouani F."/>
            <person name="Couve E."/>
            <person name="de Daruvar A."/>
            <person name="Dehoux P."/>
            <person name="Domann E."/>
            <person name="Dominguez-Bernal G."/>
            <person name="Duchaud E."/>
            <person name="Durant L."/>
            <person name="Dussurget O."/>
            <person name="Entian K.-D."/>
            <person name="Fsihi H."/>
            <person name="Garcia-del Portillo F."/>
            <person name="Garrido P."/>
            <person name="Gautier L."/>
            <person name="Goebel W."/>
            <person name="Gomez-Lopez N."/>
            <person name="Hain T."/>
            <person name="Hauf J."/>
            <person name="Jackson D."/>
            <person name="Jones L.-M."/>
            <person name="Kaerst U."/>
            <person name="Kreft J."/>
            <person name="Kuhn M."/>
            <person name="Kunst F."/>
            <person name="Kurapkat G."/>
            <person name="Madueno E."/>
            <person name="Maitournam A."/>
            <person name="Mata Vicente J."/>
            <person name="Ng E."/>
            <person name="Nedjari H."/>
            <person name="Nordsiek G."/>
            <person name="Novella S."/>
            <person name="de Pablos B."/>
            <person name="Perez-Diaz J.-C."/>
            <person name="Purcell R."/>
            <person name="Remmel B."/>
            <person name="Rose M."/>
            <person name="Schlueter T."/>
            <person name="Simoes N."/>
            <person name="Tierrez A."/>
            <person name="Vazquez-Boland J.-A."/>
            <person name="Voss H."/>
            <person name="Wehland J."/>
            <person name="Cossart P."/>
        </authorList>
    </citation>
    <scope>NUCLEOTIDE SEQUENCE [LARGE SCALE GENOMIC DNA]</scope>
    <source>
        <strain>ATCC BAA-680 / CLIP 11262</strain>
    </source>
</reference>